<organism>
    <name type="scientific">Methanococcus aeolicus (strain ATCC BAA-1280 / DSM 17508 / OCM 812 / Nankai-3)</name>
    <dbReference type="NCBI Taxonomy" id="419665"/>
    <lineage>
        <taxon>Archaea</taxon>
        <taxon>Methanobacteriati</taxon>
        <taxon>Methanobacteriota</taxon>
        <taxon>Methanomada group</taxon>
        <taxon>Methanococci</taxon>
        <taxon>Methanococcales</taxon>
        <taxon>Methanococcaceae</taxon>
        <taxon>Methanococcus</taxon>
    </lineage>
</organism>
<reference key="1">
    <citation type="submission" date="2007-06" db="EMBL/GenBank/DDBJ databases">
        <title>Complete sequence of Methanococcus aeolicus Nankai-3.</title>
        <authorList>
            <consortium name="US DOE Joint Genome Institute"/>
            <person name="Copeland A."/>
            <person name="Lucas S."/>
            <person name="Lapidus A."/>
            <person name="Barry K."/>
            <person name="Glavina del Rio T."/>
            <person name="Dalin E."/>
            <person name="Tice H."/>
            <person name="Pitluck S."/>
            <person name="Chain P."/>
            <person name="Malfatti S."/>
            <person name="Shin M."/>
            <person name="Vergez L."/>
            <person name="Schmutz J."/>
            <person name="Larimer F."/>
            <person name="Land M."/>
            <person name="Hauser L."/>
            <person name="Kyrpides N."/>
            <person name="Lykidis A."/>
            <person name="Sieprawska-Lupa M."/>
            <person name="Whitman W.B."/>
            <person name="Richardson P."/>
        </authorList>
    </citation>
    <scope>NUCLEOTIDE SEQUENCE [LARGE SCALE GENOMIC DNA]</scope>
    <source>
        <strain>ATCC BAA-1280 / DSM 17508 / OCM 812 / Nankai-3</strain>
    </source>
</reference>
<accession>A6UWU6</accession>
<gene>
    <name evidence="1" type="primary">rnp1</name>
    <name type="ordered locus">Maeo_1392</name>
</gene>
<proteinExistence type="inferred from homology"/>
<keyword id="KW-0963">Cytoplasm</keyword>
<keyword id="KW-0255">Endonuclease</keyword>
<keyword id="KW-0378">Hydrolase</keyword>
<keyword id="KW-0540">Nuclease</keyword>
<keyword id="KW-0819">tRNA processing</keyword>
<feature type="chain" id="PRO_1000046612" description="Ribonuclease P protein component 1">
    <location>
        <begin position="1"/>
        <end position="96"/>
    </location>
</feature>
<protein>
    <recommendedName>
        <fullName evidence="1">Ribonuclease P protein component 1</fullName>
        <shortName evidence="1">RNase P component 1</shortName>
        <ecNumber evidence="1">3.1.26.5</ecNumber>
    </recommendedName>
    <alternativeName>
        <fullName evidence="1">Rpp29</fullName>
    </alternativeName>
</protein>
<sequence length="96" mass="11299">MITPYNILRHELIGLDVEITQSTNKSLVGLKGKIVYETRNTINIERFDNSKEVMIPKDIAVFKFKLNEEYIEVIGELLMGRPEDRLKRKIKNIYPY</sequence>
<dbReference type="EC" id="3.1.26.5" evidence="1"/>
<dbReference type="EMBL" id="CP000743">
    <property type="protein sequence ID" value="ABR56968.1"/>
    <property type="molecule type" value="Genomic_DNA"/>
</dbReference>
<dbReference type="RefSeq" id="WP_011974100.1">
    <property type="nucleotide sequence ID" value="NC_009635.1"/>
</dbReference>
<dbReference type="SMR" id="A6UWU6"/>
<dbReference type="STRING" id="419665.Maeo_1392"/>
<dbReference type="GeneID" id="5326403"/>
<dbReference type="GeneID" id="75304872"/>
<dbReference type="KEGG" id="mae:Maeo_1392"/>
<dbReference type="eggNOG" id="arCOG00784">
    <property type="taxonomic scope" value="Archaea"/>
</dbReference>
<dbReference type="HOGENOM" id="CLU_107020_2_1_2"/>
<dbReference type="OrthoDB" id="39019at2157"/>
<dbReference type="Proteomes" id="UP000001106">
    <property type="component" value="Chromosome"/>
</dbReference>
<dbReference type="GO" id="GO:0005737">
    <property type="term" value="C:cytoplasm"/>
    <property type="evidence" value="ECO:0007669"/>
    <property type="project" value="UniProtKB-SubCell"/>
</dbReference>
<dbReference type="GO" id="GO:0000172">
    <property type="term" value="C:ribonuclease MRP complex"/>
    <property type="evidence" value="ECO:0007669"/>
    <property type="project" value="InterPro"/>
</dbReference>
<dbReference type="GO" id="GO:0030677">
    <property type="term" value="C:ribonuclease P complex"/>
    <property type="evidence" value="ECO:0007669"/>
    <property type="project" value="UniProtKB-UniRule"/>
</dbReference>
<dbReference type="GO" id="GO:0004526">
    <property type="term" value="F:ribonuclease P activity"/>
    <property type="evidence" value="ECO:0007669"/>
    <property type="project" value="UniProtKB-UniRule"/>
</dbReference>
<dbReference type="GO" id="GO:0033204">
    <property type="term" value="F:ribonuclease P RNA binding"/>
    <property type="evidence" value="ECO:0007669"/>
    <property type="project" value="InterPro"/>
</dbReference>
<dbReference type="GO" id="GO:0006364">
    <property type="term" value="P:rRNA processing"/>
    <property type="evidence" value="ECO:0007669"/>
    <property type="project" value="TreeGrafter"/>
</dbReference>
<dbReference type="GO" id="GO:0001682">
    <property type="term" value="P:tRNA 5'-leader removal"/>
    <property type="evidence" value="ECO:0007669"/>
    <property type="project" value="UniProtKB-UniRule"/>
</dbReference>
<dbReference type="Gene3D" id="2.30.30.210">
    <property type="entry name" value="Ribonuclease P/MRP, subunit p29"/>
    <property type="match status" value="1"/>
</dbReference>
<dbReference type="HAMAP" id="MF_00754">
    <property type="entry name" value="RNase_P_1"/>
    <property type="match status" value="1"/>
</dbReference>
<dbReference type="InterPro" id="IPR016848">
    <property type="entry name" value="RNase_P/MRP_Rpp29-subunit"/>
</dbReference>
<dbReference type="InterPro" id="IPR036980">
    <property type="entry name" value="RNase_P/MRP_Rpp29_sf"/>
</dbReference>
<dbReference type="InterPro" id="IPR023538">
    <property type="entry name" value="RNP1"/>
</dbReference>
<dbReference type="InterPro" id="IPR023534">
    <property type="entry name" value="Rof/RNase_P-like"/>
</dbReference>
<dbReference type="InterPro" id="IPR002730">
    <property type="entry name" value="Rpp29/RNP1"/>
</dbReference>
<dbReference type="NCBIfam" id="NF046110">
    <property type="entry name" value="RNaseP1Mthb"/>
    <property type="match status" value="1"/>
</dbReference>
<dbReference type="PANTHER" id="PTHR13348:SF0">
    <property type="entry name" value="RIBONUCLEASE P PROTEIN SUBUNIT P29"/>
    <property type="match status" value="1"/>
</dbReference>
<dbReference type="PANTHER" id="PTHR13348">
    <property type="entry name" value="RIBONUCLEASE P SUBUNIT P29"/>
    <property type="match status" value="1"/>
</dbReference>
<dbReference type="Pfam" id="PF01868">
    <property type="entry name" value="RNase_P-MRP_p29"/>
    <property type="match status" value="1"/>
</dbReference>
<dbReference type="SMART" id="SM00538">
    <property type="entry name" value="POP4"/>
    <property type="match status" value="1"/>
</dbReference>
<dbReference type="SUPFAM" id="SSF101744">
    <property type="entry name" value="Rof/RNase P subunit-like"/>
    <property type="match status" value="1"/>
</dbReference>
<evidence type="ECO:0000255" key="1">
    <source>
        <dbReference type="HAMAP-Rule" id="MF_00754"/>
    </source>
</evidence>
<comment type="function">
    <text evidence="1">Part of ribonuclease P, a protein complex that generates mature tRNA molecules by cleaving their 5'-ends.</text>
</comment>
<comment type="catalytic activity">
    <reaction evidence="1">
        <text>Endonucleolytic cleavage of RNA, removing 5'-extranucleotides from tRNA precursor.</text>
        <dbReference type="EC" id="3.1.26.5"/>
    </reaction>
</comment>
<comment type="subunit">
    <text evidence="1">Consists of a catalytic RNA component and at least 4-5 protein subunits.</text>
</comment>
<comment type="subcellular location">
    <subcellularLocation>
        <location evidence="1">Cytoplasm</location>
    </subcellularLocation>
</comment>
<comment type="similarity">
    <text evidence="1">Belongs to the eukaryotic/archaeal RNase P protein component 1 family.</text>
</comment>
<name>RNP1_META3</name>